<feature type="chain" id="PRO_0000085217" description="Heparan sulfate glucosamine 3-O-sulfotransferase 3A1">
    <location>
        <begin position="1"/>
        <end position="406"/>
    </location>
</feature>
<feature type="topological domain" description="Cytoplasmic" evidence="1">
    <location>
        <begin position="1"/>
        <end position="24"/>
    </location>
</feature>
<feature type="transmembrane region" description="Helical; Signal-anchor for type II membrane protein" evidence="1">
    <location>
        <begin position="25"/>
        <end position="43"/>
    </location>
</feature>
<feature type="topological domain" description="Lumenal" evidence="1">
    <location>
        <begin position="44"/>
        <end position="406"/>
    </location>
</feature>
<feature type="region of interest" description="Disordered" evidence="2">
    <location>
        <begin position="92"/>
        <end position="134"/>
    </location>
</feature>
<feature type="compositionally biased region" description="Basic residues" evidence="2">
    <location>
        <begin position="92"/>
        <end position="102"/>
    </location>
</feature>
<feature type="compositionally biased region" description="Acidic residues" evidence="2">
    <location>
        <begin position="107"/>
        <end position="117"/>
    </location>
</feature>
<feature type="compositionally biased region" description="Gly residues" evidence="2">
    <location>
        <begin position="120"/>
        <end position="129"/>
    </location>
</feature>
<feature type="binding site" evidence="5">
    <location>
        <begin position="162"/>
        <end position="166"/>
    </location>
    <ligand>
        <name>3'-phosphoadenylyl sulfate</name>
        <dbReference type="ChEBI" id="CHEBI:58339"/>
    </ligand>
</feature>
<feature type="binding site" evidence="5">
    <location>
        <position position="166"/>
    </location>
    <ligand>
        <name>substrate</name>
    </ligand>
</feature>
<feature type="binding site" evidence="5">
    <location>
        <begin position="184"/>
        <end position="190"/>
    </location>
    <ligand>
        <name>substrate</name>
    </ligand>
</feature>
<feature type="binding site" evidence="5">
    <location>
        <begin position="215"/>
        <end position="218"/>
    </location>
    <ligand>
        <name>substrate</name>
    </ligand>
</feature>
<feature type="binding site" evidence="5">
    <location>
        <position position="243"/>
    </location>
    <ligand>
        <name>3'-phosphoadenylyl sulfate</name>
        <dbReference type="ChEBI" id="CHEBI:58339"/>
    </ligand>
</feature>
<feature type="binding site" evidence="5">
    <location>
        <position position="251"/>
    </location>
    <ligand>
        <name>3'-phosphoadenylyl sulfate</name>
        <dbReference type="ChEBI" id="CHEBI:58339"/>
    </ligand>
</feature>
<feature type="binding site" evidence="5">
    <location>
        <begin position="255"/>
        <end position="259"/>
    </location>
    <ligand>
        <name>substrate</name>
    </ligand>
</feature>
<feature type="binding site" evidence="5">
    <location>
        <begin position="283"/>
        <end position="284"/>
    </location>
    <ligand>
        <name>substrate</name>
    </ligand>
</feature>
<feature type="binding site" evidence="5">
    <location>
        <begin position="367"/>
        <end position="370"/>
    </location>
    <ligand>
        <name>substrate</name>
    </ligand>
</feature>
<feature type="binding site" evidence="5">
    <location>
        <begin position="368"/>
        <end position="372"/>
    </location>
    <ligand>
        <name>3'-phosphoadenylyl sulfate</name>
        <dbReference type="ChEBI" id="CHEBI:58339"/>
    </ligand>
</feature>
<feature type="glycosylation site" description="N-linked (GlcNAc...) asparagine" evidence="1">
    <location>
        <position position="273"/>
    </location>
</feature>
<feature type="glycosylation site" description="N-linked (GlcNAc...) asparagine" evidence="1">
    <location>
        <position position="344"/>
    </location>
</feature>
<feature type="disulfide bond" evidence="5">
    <location>
        <begin position="351"/>
        <end position="363"/>
    </location>
</feature>
<feature type="mutagenesis site" description="99.6% loss of enzymatic activity." evidence="5">
    <original>K</original>
    <variation>A</variation>
    <location>
        <position position="161"/>
    </location>
</feature>
<feature type="mutagenesis site" description="99.6% loss of enzymatic activity; no HSV1 entry activity." evidence="3 5">
    <original>K</original>
    <variation>A</variation>
    <location>
        <position position="162"/>
    </location>
</feature>
<feature type="mutagenesis site" description="99.8% loss of enzymatic activity." evidence="5">
    <original>R</original>
    <variation>E</variation>
    <location>
        <position position="166"/>
    </location>
</feature>
<feature type="mutagenesis site" description="17% loss of enzymatic activity." evidence="5">
    <original>E</original>
    <variation>Q</variation>
    <location>
        <position position="170"/>
    </location>
</feature>
<feature type="mutagenesis site" description="44.1% loss of enzymatic activity." evidence="5">
    <original>R</original>
    <variation>S</variation>
    <location>
        <position position="173"/>
    </location>
</feature>
<feature type="mutagenesis site" description="No effect on enzymatic activity." evidence="5">
    <original>G</original>
    <variation>A</variation>
    <location>
        <position position="182"/>
    </location>
</feature>
<feature type="mutagenesis site" description="99.9% loss of enzymatic activity." evidence="5">
    <original>E</original>
    <variation>Q</variation>
    <location>
        <position position="184"/>
    </location>
</feature>
<feature type="mutagenesis site" description="Abolishes enzymatic activity." evidence="5">
    <original>H</original>
    <variation>F</variation>
    <location>
        <position position="186"/>
    </location>
</feature>
<feature type="mutagenesis site" description="99.1% loss of enzymatic activity." evidence="5">
    <original>D</original>
    <variation>N</variation>
    <location>
        <position position="189"/>
    </location>
</feature>
<feature type="mutagenesis site" description="32% loss of enzymatic activity." evidence="5">
    <original>R</original>
    <variation>E</variation>
    <location>
        <position position="190"/>
    </location>
</feature>
<feature type="mutagenesis site" description="99.5% loss of enzymatic activity." evidence="5">
    <original>K</original>
    <variation>A</variation>
    <location>
        <position position="194"/>
    </location>
</feature>
<feature type="mutagenesis site" description="99.9% loss of enzymatic activity." evidence="5">
    <original>K</original>
    <variation>A</variation>
    <location>
        <position position="215"/>
    </location>
</feature>
<feature type="mutagenesis site" description="23.3% loss of enzymatic activity." evidence="5">
    <original>S</original>
    <variation>A</variation>
    <location>
        <position position="218"/>
    </location>
</feature>
<feature type="mutagenesis site" description="47.6% loss of enzymatic activity." evidence="5">
    <original>E</original>
    <variation>Q</variation>
    <location>
        <position position="224"/>
    </location>
</feature>
<feature type="mutagenesis site" description="99.6% loss of enzymatic activity." evidence="5">
    <original>Q</original>
    <variation>A</variation>
    <location>
        <position position="255"/>
    </location>
</feature>
<feature type="mutagenesis site" description="48.3% loss of enzymatic activity." evidence="5">
    <original>K</original>
    <variation>A</variation>
    <location>
        <position position="259"/>
    </location>
</feature>
<feature type="mutagenesis site" description="65% loss of enzymatic activity." evidence="5">
    <original>I</original>
    <variation>A</variation>
    <location>
        <position position="288"/>
    </location>
</feature>
<feature type="mutagenesis site" description="33.6% loss of enzymatic activity." evidence="5">
    <original>K</original>
    <variation>A</variation>
    <location>
        <position position="293"/>
    </location>
</feature>
<feature type="mutagenesis site" description="No effect on enzymatic activity." evidence="5">
    <original>H</original>
    <variation>A</variation>
    <location>
        <position position="362"/>
    </location>
</feature>
<feature type="mutagenesis site" description="43% loss of enzymatic activity." evidence="5">
    <original>G</original>
    <variation>A</variation>
    <location>
        <position position="365"/>
    </location>
</feature>
<feature type="mutagenesis site" description="99.8% loss of enzymatic activity." evidence="5">
    <original>K</original>
    <variation>A</variation>
    <location>
        <position position="366"/>
    </location>
</feature>
<feature type="mutagenesis site" description="99.9% loss of enzymatic activity." evidence="5">
    <original>K</original>
    <variation>A</variation>
    <location>
        <position position="368"/>
    </location>
</feature>
<feature type="mutagenesis site" description="99.2% loss of enzymatic activity." evidence="5">
    <original>R</original>
    <variation>E</variation>
    <location>
        <position position="370"/>
    </location>
</feature>
<feature type="helix" evidence="10">
    <location>
        <begin position="139"/>
        <end position="147"/>
    </location>
</feature>
<feature type="strand" evidence="11">
    <location>
        <begin position="154"/>
        <end position="159"/>
    </location>
</feature>
<feature type="helix" evidence="11">
    <location>
        <begin position="165"/>
        <end position="172"/>
    </location>
</feature>
<feature type="strand" evidence="11">
    <location>
        <begin position="178"/>
        <end position="180"/>
    </location>
</feature>
<feature type="helix" evidence="11">
    <location>
        <begin position="187"/>
        <end position="191"/>
    </location>
</feature>
<feature type="helix" evidence="11">
    <location>
        <begin position="192"/>
        <end position="194"/>
    </location>
</feature>
<feature type="helix" evidence="11">
    <location>
        <begin position="195"/>
        <end position="202"/>
    </location>
</feature>
<feature type="strand" evidence="11">
    <location>
        <begin position="211"/>
        <end position="215"/>
    </location>
</feature>
<feature type="helix" evidence="11">
    <location>
        <begin position="217"/>
        <end position="221"/>
    </location>
</feature>
<feature type="helix" evidence="11">
    <location>
        <begin position="225"/>
        <end position="232"/>
    </location>
</feature>
<feature type="strand" evidence="11">
    <location>
        <begin position="237"/>
        <end position="242"/>
    </location>
</feature>
<feature type="helix" evidence="11">
    <location>
        <begin position="245"/>
        <end position="259"/>
    </location>
</feature>
<feature type="helix" evidence="11">
    <location>
        <begin position="266"/>
        <end position="270"/>
    </location>
</feature>
<feature type="strand" evidence="12">
    <location>
        <begin position="271"/>
        <end position="273"/>
    </location>
</feature>
<feature type="strand" evidence="11">
    <location>
        <begin position="274"/>
        <end position="279"/>
    </location>
</feature>
<feature type="helix" evidence="11">
    <location>
        <begin position="284"/>
        <end position="287"/>
    </location>
</feature>
<feature type="helix" evidence="11">
    <location>
        <begin position="291"/>
        <end position="299"/>
    </location>
</feature>
<feature type="helix" evidence="11">
    <location>
        <begin position="304"/>
        <end position="306"/>
    </location>
</feature>
<feature type="strand" evidence="11">
    <location>
        <begin position="307"/>
        <end position="311"/>
    </location>
</feature>
<feature type="helix" evidence="11">
    <location>
        <begin position="312"/>
        <end position="317"/>
    </location>
</feature>
<feature type="helix" evidence="11">
    <location>
        <begin position="319"/>
        <end position="330"/>
    </location>
</feature>
<feature type="helix" evidence="11">
    <location>
        <begin position="338"/>
        <end position="340"/>
    </location>
</feature>
<feature type="strand" evidence="11">
    <location>
        <begin position="341"/>
        <end position="344"/>
    </location>
</feature>
<feature type="turn" evidence="11">
    <location>
        <begin position="345"/>
        <end position="348"/>
    </location>
</feature>
<feature type="strand" evidence="11">
    <location>
        <begin position="349"/>
        <end position="355"/>
    </location>
</feature>
<feature type="strand" evidence="11">
    <location>
        <begin position="358"/>
        <end position="360"/>
    </location>
</feature>
<feature type="helix" evidence="11">
    <location>
        <begin position="377"/>
        <end position="398"/>
    </location>
</feature>
<keyword id="KW-0002">3D-structure</keyword>
<keyword id="KW-1015">Disulfide bond</keyword>
<keyword id="KW-0325">Glycoprotein</keyword>
<keyword id="KW-0333">Golgi apparatus</keyword>
<keyword id="KW-0472">Membrane</keyword>
<keyword id="KW-1267">Proteomics identification</keyword>
<keyword id="KW-1185">Reference proteome</keyword>
<keyword id="KW-0735">Signal-anchor</keyword>
<keyword id="KW-0808">Transferase</keyword>
<keyword id="KW-0812">Transmembrane</keyword>
<keyword id="KW-1133">Transmembrane helix</keyword>
<gene>
    <name type="primary">HS3ST3A1</name>
    <name type="synonym">3OST3A1</name>
    <name type="synonym">HS3ST3A</name>
    <name type="ORF">UNQ2551/PRO6180</name>
</gene>
<name>HS3SA_HUMAN</name>
<accession>Q9Y663</accession>
<accession>A8K7N2</accession>
<protein>
    <recommendedName>
        <fullName>Heparan sulfate glucosamine 3-O-sulfotransferase 3A1</fullName>
        <ecNumber evidence="7">2.8.2.30</ecNumber>
    </recommendedName>
    <alternativeName>
        <fullName evidence="8">Heparan sulfate D-glucosaminyl 3-O-sulfotransferase 3A1</fullName>
        <shortName evidence="8">3-OST-3A</shortName>
        <shortName>Heparan sulfate 3-O-sulfotransferase 3A1</shortName>
        <shortName>h3-OST-3A</shortName>
    </alternativeName>
</protein>
<reference key="1">
    <citation type="journal article" date="1999" name="J. Biol. Chem.">
        <title>Multiple isoforms of heparan sulfate D-glucosaminyl 3-O-sulfotransferase. Isolation, characterization, and expression of human cDNAs and identification of distinct genomic loci.</title>
        <authorList>
            <person name="Shworak N.W."/>
            <person name="Liu J."/>
            <person name="Petros L.M."/>
            <person name="Zhang L."/>
            <person name="Kobayashi M."/>
            <person name="Copeland N.G."/>
            <person name="Jenkins N.A."/>
            <person name="Rosenberg R.D."/>
        </authorList>
    </citation>
    <scope>NUCLEOTIDE SEQUENCE [MRNA]</scope>
    <scope>TISSUE SPECIFICITY</scope>
    <source>
        <tissue>Liver</tissue>
    </source>
</reference>
<reference key="2">
    <citation type="journal article" date="2003" name="Genome Res.">
        <title>The secreted protein discovery initiative (SPDI), a large-scale effort to identify novel human secreted and transmembrane proteins: a bioinformatics assessment.</title>
        <authorList>
            <person name="Clark H.F."/>
            <person name="Gurney A.L."/>
            <person name="Abaya E."/>
            <person name="Baker K."/>
            <person name="Baldwin D.T."/>
            <person name="Brush J."/>
            <person name="Chen J."/>
            <person name="Chow B."/>
            <person name="Chui C."/>
            <person name="Crowley C."/>
            <person name="Currell B."/>
            <person name="Deuel B."/>
            <person name="Dowd P."/>
            <person name="Eaton D."/>
            <person name="Foster J.S."/>
            <person name="Grimaldi C."/>
            <person name="Gu Q."/>
            <person name="Hass P.E."/>
            <person name="Heldens S."/>
            <person name="Huang A."/>
            <person name="Kim H.S."/>
            <person name="Klimowski L."/>
            <person name="Jin Y."/>
            <person name="Johnson S."/>
            <person name="Lee J."/>
            <person name="Lewis L."/>
            <person name="Liao D."/>
            <person name="Mark M.R."/>
            <person name="Robbie E."/>
            <person name="Sanchez C."/>
            <person name="Schoenfeld J."/>
            <person name="Seshagiri S."/>
            <person name="Simmons L."/>
            <person name="Singh J."/>
            <person name="Smith V."/>
            <person name="Stinson J."/>
            <person name="Vagts A."/>
            <person name="Vandlen R.L."/>
            <person name="Watanabe C."/>
            <person name="Wieand D."/>
            <person name="Woods K."/>
            <person name="Xie M.-H."/>
            <person name="Yansura D.G."/>
            <person name="Yi S."/>
            <person name="Yu G."/>
            <person name="Yuan J."/>
            <person name="Zhang M."/>
            <person name="Zhang Z."/>
            <person name="Goddard A.D."/>
            <person name="Wood W.I."/>
            <person name="Godowski P.J."/>
            <person name="Gray A.M."/>
        </authorList>
    </citation>
    <scope>NUCLEOTIDE SEQUENCE [LARGE SCALE MRNA]</scope>
</reference>
<reference key="3">
    <citation type="journal article" date="2004" name="Nat. Genet.">
        <title>Complete sequencing and characterization of 21,243 full-length human cDNAs.</title>
        <authorList>
            <person name="Ota T."/>
            <person name="Suzuki Y."/>
            <person name="Nishikawa T."/>
            <person name="Otsuki T."/>
            <person name="Sugiyama T."/>
            <person name="Irie R."/>
            <person name="Wakamatsu A."/>
            <person name="Hayashi K."/>
            <person name="Sato H."/>
            <person name="Nagai K."/>
            <person name="Kimura K."/>
            <person name="Makita H."/>
            <person name="Sekine M."/>
            <person name="Obayashi M."/>
            <person name="Nishi T."/>
            <person name="Shibahara T."/>
            <person name="Tanaka T."/>
            <person name="Ishii S."/>
            <person name="Yamamoto J."/>
            <person name="Saito K."/>
            <person name="Kawai Y."/>
            <person name="Isono Y."/>
            <person name="Nakamura Y."/>
            <person name="Nagahari K."/>
            <person name="Murakami K."/>
            <person name="Yasuda T."/>
            <person name="Iwayanagi T."/>
            <person name="Wagatsuma M."/>
            <person name="Shiratori A."/>
            <person name="Sudo H."/>
            <person name="Hosoiri T."/>
            <person name="Kaku Y."/>
            <person name="Kodaira H."/>
            <person name="Kondo H."/>
            <person name="Sugawara M."/>
            <person name="Takahashi M."/>
            <person name="Kanda K."/>
            <person name="Yokoi T."/>
            <person name="Furuya T."/>
            <person name="Kikkawa E."/>
            <person name="Omura Y."/>
            <person name="Abe K."/>
            <person name="Kamihara K."/>
            <person name="Katsuta N."/>
            <person name="Sato K."/>
            <person name="Tanikawa M."/>
            <person name="Yamazaki M."/>
            <person name="Ninomiya K."/>
            <person name="Ishibashi T."/>
            <person name="Yamashita H."/>
            <person name="Murakawa K."/>
            <person name="Fujimori K."/>
            <person name="Tanai H."/>
            <person name="Kimata M."/>
            <person name="Watanabe M."/>
            <person name="Hiraoka S."/>
            <person name="Chiba Y."/>
            <person name="Ishida S."/>
            <person name="Ono Y."/>
            <person name="Takiguchi S."/>
            <person name="Watanabe S."/>
            <person name="Yosida M."/>
            <person name="Hotuta T."/>
            <person name="Kusano J."/>
            <person name="Kanehori K."/>
            <person name="Takahashi-Fujii A."/>
            <person name="Hara H."/>
            <person name="Tanase T.-O."/>
            <person name="Nomura Y."/>
            <person name="Togiya S."/>
            <person name="Komai F."/>
            <person name="Hara R."/>
            <person name="Takeuchi K."/>
            <person name="Arita M."/>
            <person name="Imose N."/>
            <person name="Musashino K."/>
            <person name="Yuuki H."/>
            <person name="Oshima A."/>
            <person name="Sasaki N."/>
            <person name="Aotsuka S."/>
            <person name="Yoshikawa Y."/>
            <person name="Matsunawa H."/>
            <person name="Ichihara T."/>
            <person name="Shiohata N."/>
            <person name="Sano S."/>
            <person name="Moriya S."/>
            <person name="Momiyama H."/>
            <person name="Satoh N."/>
            <person name="Takami S."/>
            <person name="Terashima Y."/>
            <person name="Suzuki O."/>
            <person name="Nakagawa S."/>
            <person name="Senoh A."/>
            <person name="Mizoguchi H."/>
            <person name="Goto Y."/>
            <person name="Shimizu F."/>
            <person name="Wakebe H."/>
            <person name="Hishigaki H."/>
            <person name="Watanabe T."/>
            <person name="Sugiyama A."/>
            <person name="Takemoto M."/>
            <person name="Kawakami B."/>
            <person name="Yamazaki M."/>
            <person name="Watanabe K."/>
            <person name="Kumagai A."/>
            <person name="Itakura S."/>
            <person name="Fukuzumi Y."/>
            <person name="Fujimori Y."/>
            <person name="Komiyama M."/>
            <person name="Tashiro H."/>
            <person name="Tanigami A."/>
            <person name="Fujiwara T."/>
            <person name="Ono T."/>
            <person name="Yamada K."/>
            <person name="Fujii Y."/>
            <person name="Ozaki K."/>
            <person name="Hirao M."/>
            <person name="Ohmori Y."/>
            <person name="Kawabata A."/>
            <person name="Hikiji T."/>
            <person name="Kobatake N."/>
            <person name="Inagaki H."/>
            <person name="Ikema Y."/>
            <person name="Okamoto S."/>
            <person name="Okitani R."/>
            <person name="Kawakami T."/>
            <person name="Noguchi S."/>
            <person name="Itoh T."/>
            <person name="Shigeta K."/>
            <person name="Senba T."/>
            <person name="Matsumura K."/>
            <person name="Nakajima Y."/>
            <person name="Mizuno T."/>
            <person name="Morinaga M."/>
            <person name="Sasaki M."/>
            <person name="Togashi T."/>
            <person name="Oyama M."/>
            <person name="Hata H."/>
            <person name="Watanabe M."/>
            <person name="Komatsu T."/>
            <person name="Mizushima-Sugano J."/>
            <person name="Satoh T."/>
            <person name="Shirai Y."/>
            <person name="Takahashi Y."/>
            <person name="Nakagawa K."/>
            <person name="Okumura K."/>
            <person name="Nagase T."/>
            <person name="Nomura N."/>
            <person name="Kikuchi H."/>
            <person name="Masuho Y."/>
            <person name="Yamashita R."/>
            <person name="Nakai K."/>
            <person name="Yada T."/>
            <person name="Nakamura Y."/>
            <person name="Ohara O."/>
            <person name="Isogai T."/>
            <person name="Sugano S."/>
        </authorList>
    </citation>
    <scope>NUCLEOTIDE SEQUENCE [LARGE SCALE MRNA]</scope>
    <source>
        <tissue>Spleen</tissue>
    </source>
</reference>
<reference key="4">
    <citation type="submission" date="2005-09" db="EMBL/GenBank/DDBJ databases">
        <authorList>
            <person name="Mural R.J."/>
            <person name="Istrail S."/>
            <person name="Sutton G.G."/>
            <person name="Florea L."/>
            <person name="Halpern A.L."/>
            <person name="Mobarry C.M."/>
            <person name="Lippert R."/>
            <person name="Walenz B."/>
            <person name="Shatkay H."/>
            <person name="Dew I."/>
            <person name="Miller J.R."/>
            <person name="Flanigan M.J."/>
            <person name="Edwards N.J."/>
            <person name="Bolanos R."/>
            <person name="Fasulo D."/>
            <person name="Halldorsson B.V."/>
            <person name="Hannenhalli S."/>
            <person name="Turner R."/>
            <person name="Yooseph S."/>
            <person name="Lu F."/>
            <person name="Nusskern D.R."/>
            <person name="Shue B.C."/>
            <person name="Zheng X.H."/>
            <person name="Zhong F."/>
            <person name="Delcher A.L."/>
            <person name="Huson D.H."/>
            <person name="Kravitz S.A."/>
            <person name="Mouchard L."/>
            <person name="Reinert K."/>
            <person name="Remington K.A."/>
            <person name="Clark A.G."/>
            <person name="Waterman M.S."/>
            <person name="Eichler E.E."/>
            <person name="Adams M.D."/>
            <person name="Hunkapiller M.W."/>
            <person name="Myers E.W."/>
            <person name="Venter J.C."/>
        </authorList>
    </citation>
    <scope>NUCLEOTIDE SEQUENCE [LARGE SCALE GENOMIC DNA]</scope>
</reference>
<reference key="5">
    <citation type="journal article" date="2004" name="Genome Res.">
        <title>The status, quality, and expansion of the NIH full-length cDNA project: the Mammalian Gene Collection (MGC).</title>
        <authorList>
            <consortium name="The MGC Project Team"/>
        </authorList>
    </citation>
    <scope>NUCLEOTIDE SEQUENCE [LARGE SCALE MRNA]</scope>
    <source>
        <tissue>Brain</tissue>
    </source>
</reference>
<reference key="6">
    <citation type="journal article" date="1999" name="Cell">
        <title>A novel role for 3-O-sulfated heparan sulfate in herpes simplex virus 1 entry.</title>
        <authorList>
            <person name="Shukla D."/>
            <person name="Liu J."/>
            <person name="Blaiklock P."/>
            <person name="Shworak N.W."/>
            <person name="Bai X."/>
            <person name="Esko J.D."/>
            <person name="Cohen G.H."/>
            <person name="Eisenberg R.J."/>
            <person name="Rosenberg R.D."/>
            <person name="Spear P.G."/>
        </authorList>
    </citation>
    <scope>FUNCTION IN HSV-1 ENTRY</scope>
    <scope>MUTAGENESIS OF LYS-162</scope>
</reference>
<reference key="7">
    <citation type="journal article" date="1999" name="J. Biol. Chem.">
        <title>Expression of heparan sulfate D-glucosaminyl 3-O-sulfotransferase isoforms reveals novel substrate specificities.</title>
        <authorList>
            <person name="Liu J."/>
            <person name="Shworak N.W."/>
            <person name="Sinay P."/>
            <person name="Schwartz J.J."/>
            <person name="Zhang L."/>
            <person name="Fritze L.M.S."/>
            <person name="Rosenberg R.D."/>
        </authorList>
    </citation>
    <scope>FUNCTION</scope>
    <scope>CATALYTIC ACTIVITY</scope>
</reference>
<reference key="8">
    <citation type="journal article" date="1999" name="J. Biol. Chem.">
        <title>Heparan sulfate D-glucosaminyl 3-O-sulfotransferase-3A sulfates N-unsubstituted glucosamine residues.</title>
        <authorList>
            <person name="Liu J."/>
            <person name="Shriver Z."/>
            <person name="Blaiklock P."/>
            <person name="Yoshida K."/>
            <person name="Sasisekharan R."/>
            <person name="Rosenberg R.D."/>
        </authorList>
    </citation>
    <scope>FUNCTION</scope>
</reference>
<reference key="9">
    <citation type="journal article" date="2004" name="J. Biol. Chem.">
        <title>Structural analysis of the sulfotransferase (3-o-sulfotransferase isoform 3) involved in the biosynthesis of an entry receptor for herpes simplex virus 1.</title>
        <authorList>
            <person name="Moon A.F."/>
            <person name="Edavettal S.C."/>
            <person name="Krahn J.M."/>
            <person name="Munoz E.M."/>
            <person name="Negishi M."/>
            <person name="Linhardt R.J."/>
            <person name="Liu J."/>
            <person name="Pedersen L.C."/>
        </authorList>
    </citation>
    <scope>X-RAY CRYSTALLOGRAPHY (1.85 ANGSTROMS) OF 139-406 IN A TERNARY COMPLEX WITH PAPS AND A TETRASACCHARIDE</scope>
    <scope>DISULFIDE BOND</scope>
    <scope>FUNCTION</scope>
    <scope>CATALYTIC ACTIVITY</scope>
    <scope>BINDING SITES</scope>
    <scope>MUTAGENESIS OF LYS-161; LYS-162; ARG-166; GLU-170; ARG-173; GLY-182; GLU-184; HIS-186; ASP-189; ARG-190; LYS-194; LYS-215; SER-218; GLU-224; GLN-255; LYS-259; ILE-288; LYS-293; HIS-362; GLY-365; LYS-366; LYS-368 AND ARG-370</scope>
</reference>
<organism>
    <name type="scientific">Homo sapiens</name>
    <name type="common">Human</name>
    <dbReference type="NCBI Taxonomy" id="9606"/>
    <lineage>
        <taxon>Eukaryota</taxon>
        <taxon>Metazoa</taxon>
        <taxon>Chordata</taxon>
        <taxon>Craniata</taxon>
        <taxon>Vertebrata</taxon>
        <taxon>Euteleostomi</taxon>
        <taxon>Mammalia</taxon>
        <taxon>Eutheria</taxon>
        <taxon>Euarchontoglires</taxon>
        <taxon>Primates</taxon>
        <taxon>Haplorrhini</taxon>
        <taxon>Catarrhini</taxon>
        <taxon>Hominidae</taxon>
        <taxon>Homo</taxon>
    </lineage>
</organism>
<dbReference type="EC" id="2.8.2.30" evidence="7"/>
<dbReference type="EMBL" id="AF105376">
    <property type="protein sequence ID" value="AAD30208.1"/>
    <property type="molecule type" value="mRNA"/>
</dbReference>
<dbReference type="EMBL" id="AY358838">
    <property type="protein sequence ID" value="AAQ89197.1"/>
    <property type="molecule type" value="mRNA"/>
</dbReference>
<dbReference type="EMBL" id="AK292047">
    <property type="protein sequence ID" value="BAF84736.1"/>
    <property type="molecule type" value="mRNA"/>
</dbReference>
<dbReference type="EMBL" id="CH471108">
    <property type="protein sequence ID" value="EAW89959.1"/>
    <property type="molecule type" value="Genomic_DNA"/>
</dbReference>
<dbReference type="EMBL" id="BC044647">
    <property type="protein sequence ID" value="AAH44647.1"/>
    <property type="molecule type" value="mRNA"/>
</dbReference>
<dbReference type="CCDS" id="CCDS11165.1"/>
<dbReference type="RefSeq" id="NP_006033.1">
    <property type="nucleotide sequence ID" value="NM_006042.3"/>
</dbReference>
<dbReference type="PDB" id="1T8T">
    <property type="method" value="X-ray"/>
    <property type="resolution" value="1.85 A"/>
    <property type="chains" value="A/B=139-406"/>
</dbReference>
<dbReference type="PDB" id="1T8U">
    <property type="method" value="X-ray"/>
    <property type="resolution" value="1.95 A"/>
    <property type="chains" value="A/B=139-406"/>
</dbReference>
<dbReference type="PDB" id="6XKG">
    <property type="method" value="X-ray"/>
    <property type="resolution" value="1.55 A"/>
    <property type="chains" value="A/B=139-406"/>
</dbReference>
<dbReference type="PDB" id="6XL8">
    <property type="method" value="X-ray"/>
    <property type="resolution" value="2.34 A"/>
    <property type="chains" value="A/B=139-406"/>
</dbReference>
<dbReference type="PDBsum" id="1T8T"/>
<dbReference type="PDBsum" id="1T8U"/>
<dbReference type="PDBsum" id="6XKG"/>
<dbReference type="PDBsum" id="6XL8"/>
<dbReference type="SMR" id="Q9Y663"/>
<dbReference type="BioGRID" id="115280">
    <property type="interactions" value="3"/>
</dbReference>
<dbReference type="FunCoup" id="Q9Y663">
    <property type="interactions" value="274"/>
</dbReference>
<dbReference type="IntAct" id="Q9Y663">
    <property type="interactions" value="1"/>
</dbReference>
<dbReference type="STRING" id="9606.ENSP00000284110"/>
<dbReference type="DrugBank" id="DB03981">
    <property type="generic name" value="1,4-Dideoxy-5-Dehydro-O2-Sulfo-Glucuronic Acid"/>
</dbReference>
<dbReference type="DrugBank" id="DB01812">
    <property type="generic name" value="Adenosine 3',5'-diphosphate"/>
</dbReference>
<dbReference type="DrugBank" id="DB03959">
    <property type="generic name" value="N,O6-Disulfo-Glucosamine"/>
</dbReference>
<dbReference type="DrugBank" id="DB02264">
    <property type="generic name" value="O2-Sulfo-Glucuronic Acid"/>
</dbReference>
<dbReference type="GlyCosmos" id="Q9Y663">
    <property type="glycosylation" value="2 sites, No reported glycans"/>
</dbReference>
<dbReference type="GlyGen" id="Q9Y663">
    <property type="glycosylation" value="2 sites"/>
</dbReference>
<dbReference type="iPTMnet" id="Q9Y663"/>
<dbReference type="PhosphoSitePlus" id="Q9Y663"/>
<dbReference type="BioMuta" id="HS3ST3A1"/>
<dbReference type="DMDM" id="61214551"/>
<dbReference type="MassIVE" id="Q9Y663"/>
<dbReference type="PaxDb" id="9606-ENSP00000284110"/>
<dbReference type="PeptideAtlas" id="Q9Y663"/>
<dbReference type="ProteomicsDB" id="86606"/>
<dbReference type="Antibodypedia" id="25095">
    <property type="antibodies" value="40 antibodies from 12 providers"/>
</dbReference>
<dbReference type="DNASU" id="9955"/>
<dbReference type="Ensembl" id="ENST00000284110.2">
    <property type="protein sequence ID" value="ENSP00000284110.1"/>
    <property type="gene ID" value="ENSG00000153976.3"/>
</dbReference>
<dbReference type="GeneID" id="9955"/>
<dbReference type="KEGG" id="hsa:9955"/>
<dbReference type="MANE-Select" id="ENST00000284110.2">
    <property type="protein sequence ID" value="ENSP00000284110.1"/>
    <property type="RefSeq nucleotide sequence ID" value="NM_006042.3"/>
    <property type="RefSeq protein sequence ID" value="NP_006033.1"/>
</dbReference>
<dbReference type="UCSC" id="uc002gob.1">
    <property type="organism name" value="human"/>
</dbReference>
<dbReference type="AGR" id="HGNC:5196"/>
<dbReference type="CTD" id="9955"/>
<dbReference type="DisGeNET" id="9955"/>
<dbReference type="GeneCards" id="HS3ST3A1"/>
<dbReference type="HGNC" id="HGNC:5196">
    <property type="gene designation" value="HS3ST3A1"/>
</dbReference>
<dbReference type="HPA" id="ENSG00000153976">
    <property type="expression patterns" value="Tissue enhanced (ovary)"/>
</dbReference>
<dbReference type="MIM" id="604057">
    <property type="type" value="gene"/>
</dbReference>
<dbReference type="neXtProt" id="NX_Q9Y663"/>
<dbReference type="OpenTargets" id="ENSG00000153976"/>
<dbReference type="PharmGKB" id="PA29469"/>
<dbReference type="VEuPathDB" id="HostDB:ENSG00000153976"/>
<dbReference type="eggNOG" id="KOG3704">
    <property type="taxonomic scope" value="Eukaryota"/>
</dbReference>
<dbReference type="GeneTree" id="ENSGT00940000162249"/>
<dbReference type="HOGENOM" id="CLU_017703_0_1_1"/>
<dbReference type="InParanoid" id="Q9Y663"/>
<dbReference type="OMA" id="FYCLVER"/>
<dbReference type="OrthoDB" id="411451at2759"/>
<dbReference type="PAN-GO" id="Q9Y663">
    <property type="GO annotations" value="1 GO annotation based on evolutionary models"/>
</dbReference>
<dbReference type="PhylomeDB" id="Q9Y663"/>
<dbReference type="TreeFam" id="TF350755"/>
<dbReference type="BioCyc" id="MetaCyc:HS07937-MONOMER"/>
<dbReference type="BRENDA" id="2.8.2.30">
    <property type="organism ID" value="2681"/>
</dbReference>
<dbReference type="PathwayCommons" id="Q9Y663"/>
<dbReference type="Reactome" id="R-HSA-2022928">
    <property type="pathway name" value="HS-GAG biosynthesis"/>
</dbReference>
<dbReference type="BioGRID-ORCS" id="9955">
    <property type="hits" value="13 hits in 1155 CRISPR screens"/>
</dbReference>
<dbReference type="ChiTaRS" id="HS3ST3A1">
    <property type="organism name" value="human"/>
</dbReference>
<dbReference type="EvolutionaryTrace" id="Q9Y663"/>
<dbReference type="GeneWiki" id="HS3ST3A1"/>
<dbReference type="GenomeRNAi" id="9955"/>
<dbReference type="Pharos" id="Q9Y663">
    <property type="development level" value="Tbio"/>
</dbReference>
<dbReference type="PRO" id="PR:Q9Y663"/>
<dbReference type="Proteomes" id="UP000005640">
    <property type="component" value="Chromosome 17"/>
</dbReference>
<dbReference type="RNAct" id="Q9Y663">
    <property type="molecule type" value="protein"/>
</dbReference>
<dbReference type="Bgee" id="ENSG00000153976">
    <property type="expression patterns" value="Expressed in cartilage tissue and 117 other cell types or tissues"/>
</dbReference>
<dbReference type="ExpressionAtlas" id="Q9Y663">
    <property type="expression patterns" value="baseline and differential"/>
</dbReference>
<dbReference type="GO" id="GO:0000139">
    <property type="term" value="C:Golgi membrane"/>
    <property type="evidence" value="ECO:0000304"/>
    <property type="project" value="Reactome"/>
</dbReference>
<dbReference type="GO" id="GO:0016020">
    <property type="term" value="C:membrane"/>
    <property type="evidence" value="ECO:0000304"/>
    <property type="project" value="ProtInc"/>
</dbReference>
<dbReference type="GO" id="GO:0008467">
    <property type="term" value="F:[heparan sulfate]-glucosamine 3-sulfotransferase activity"/>
    <property type="evidence" value="ECO:0000314"/>
    <property type="project" value="UniProtKB"/>
</dbReference>
<dbReference type="GO" id="GO:0008146">
    <property type="term" value="F:sulfotransferase activity"/>
    <property type="evidence" value="ECO:0000304"/>
    <property type="project" value="ProtInc"/>
</dbReference>
<dbReference type="GO" id="GO:0001658">
    <property type="term" value="P:branching involved in ureteric bud morphogenesis"/>
    <property type="evidence" value="ECO:0007669"/>
    <property type="project" value="Ensembl"/>
</dbReference>
<dbReference type="GO" id="GO:0006024">
    <property type="term" value="P:glycosaminoglycan biosynthetic process"/>
    <property type="evidence" value="ECO:0000314"/>
    <property type="project" value="UniProtKB"/>
</dbReference>
<dbReference type="GO" id="GO:0015012">
    <property type="term" value="P:heparan sulfate proteoglycan biosynthetic process"/>
    <property type="evidence" value="ECO:0007669"/>
    <property type="project" value="Ensembl"/>
</dbReference>
<dbReference type="FunFam" id="3.40.50.300:FF:000194">
    <property type="entry name" value="Sulfotransferase"/>
    <property type="match status" value="1"/>
</dbReference>
<dbReference type="Gene3D" id="3.40.50.300">
    <property type="entry name" value="P-loop containing nucleotide triphosphate hydrolases"/>
    <property type="match status" value="1"/>
</dbReference>
<dbReference type="InterPro" id="IPR037359">
    <property type="entry name" value="NST/OST"/>
</dbReference>
<dbReference type="InterPro" id="IPR027417">
    <property type="entry name" value="P-loop_NTPase"/>
</dbReference>
<dbReference type="InterPro" id="IPR000863">
    <property type="entry name" value="Sulfotransferase_dom"/>
</dbReference>
<dbReference type="PANTHER" id="PTHR10605:SF64">
    <property type="entry name" value="HEPARAN SULFATE GLUCOSAMINE 3-O-SULFOTRANSFERASE 3A1"/>
    <property type="match status" value="1"/>
</dbReference>
<dbReference type="PANTHER" id="PTHR10605">
    <property type="entry name" value="HEPARAN SULFATE SULFOTRANSFERASE"/>
    <property type="match status" value="1"/>
</dbReference>
<dbReference type="Pfam" id="PF00685">
    <property type="entry name" value="Sulfotransfer_1"/>
    <property type="match status" value="1"/>
</dbReference>
<dbReference type="SUPFAM" id="SSF52540">
    <property type="entry name" value="P-loop containing nucleoside triphosphate hydrolases"/>
    <property type="match status" value="1"/>
</dbReference>
<comment type="function">
    <text evidence="3 4 5 7">Sulfotransferase that utilizes 3'-phospho-5'-adenylyl sulfate (PAPS) to catalyze the transfer of a sulfo group to an N-unsubstituted glucosamine linked to a 2-O-sulfo iduronic acid unit on heparan sulfate (PubMed:10520990, PubMed:10608887, PubMed:15304505, PubMed:9988768). Catalyzes the O-sulfation of glucosamine in IdoUA2S-GlcNS and also in IdoUA2S-GlcNH2 (PubMed:10520990, PubMed:15304505, PubMed:9988768). The substrate-specific O-sulfation generates an enzyme-modified heparan sulfate which acts as a binding receptor to Herpes simplex virus-1 (HSV-1) and permits its entry (PubMed:10520990). Unlike HS3ST1/3-OST-1, does not convert non-anticoagulant heparan sulfate to anticoagulant heparan sulfate (PubMed:10520990).</text>
</comment>
<comment type="catalytic activity">
    <reaction evidence="5 7">
        <text>alpha-D-glucosaminyl-[heparan sulfate](n) + 3'-phosphoadenylyl sulfate = 3-sulfo-alpha-D-glucosaminyl-[heparan sulfate](n) + adenosine 3',5'-bisphosphate + H(+)</text>
        <dbReference type="Rhea" id="RHEA:15461"/>
        <dbReference type="Rhea" id="RHEA-COMP:9830"/>
        <dbReference type="Rhea" id="RHEA-COMP:9831"/>
        <dbReference type="ChEBI" id="CHEBI:15378"/>
        <dbReference type="ChEBI" id="CHEBI:58339"/>
        <dbReference type="ChEBI" id="CHEBI:58343"/>
        <dbReference type="ChEBI" id="CHEBI:58388"/>
        <dbReference type="ChEBI" id="CHEBI:70975"/>
        <dbReference type="EC" id="2.8.2.30"/>
    </reaction>
</comment>
<comment type="subcellular location">
    <subcellularLocation>
        <location evidence="9">Golgi apparatus membrane</location>
        <topology evidence="9">Single-pass type II membrane protein</topology>
    </subcellularLocation>
</comment>
<comment type="tissue specificity">
    <text evidence="6">Ubiquitous. Most abundant in heart and placenta, followed by liver and kidney.</text>
</comment>
<comment type="similarity">
    <text evidence="9">Belongs to the sulfotransferase 1 family.</text>
</comment>
<proteinExistence type="evidence at protein level"/>
<evidence type="ECO:0000255" key="1"/>
<evidence type="ECO:0000256" key="2">
    <source>
        <dbReference type="SAM" id="MobiDB-lite"/>
    </source>
</evidence>
<evidence type="ECO:0000269" key="3">
    <source>
    </source>
</evidence>
<evidence type="ECO:0000269" key="4">
    <source>
    </source>
</evidence>
<evidence type="ECO:0000269" key="5">
    <source>
    </source>
</evidence>
<evidence type="ECO:0000269" key="6">
    <source>
    </source>
</evidence>
<evidence type="ECO:0000269" key="7">
    <source>
    </source>
</evidence>
<evidence type="ECO:0000303" key="8">
    <source>
    </source>
</evidence>
<evidence type="ECO:0000305" key="9"/>
<evidence type="ECO:0007829" key="10">
    <source>
        <dbReference type="PDB" id="1T8T"/>
    </source>
</evidence>
<evidence type="ECO:0007829" key="11">
    <source>
        <dbReference type="PDB" id="6XKG"/>
    </source>
</evidence>
<evidence type="ECO:0007829" key="12">
    <source>
        <dbReference type="PDB" id="6XL8"/>
    </source>
</evidence>
<sequence length="406" mass="44900">MAPPGPASALSTSAEPLSRSIFRKFLLMLCSLLTSLYVFYCLAERCQTLSGPVVGLSGGGEEAGAPGGGVLAGGPRELAVWPAAAQRKRLLQLPQWRRRRPPAPRDDGEEAAWEEESPGLSGGPGGSGAGSTVAEAPPGTLALLLDEGSKQLPQAIIIGVKKGGTRALLEFLRVHPDVRAVGAEPHFFDRSYDKGLAWYRDLMPRTLDGQITMEKTPSYFVTREAPARISAMSKDTKLIVVVRDPVTRAISDYTQTLSKRPDIPTFESLTFKNRTAGLIDTSWSAIQIGIYAKHLEHWLRHFPIRQMLFVSGERLISDPAGELGRVQDFLGLKRIITDKHFYFNKTKGFPCLKKAEGSSRPHCLGKTKGRTHPEIDREVVRRLREFYRPFNLKFYQMTGHDFGWDG</sequence>